<sequence length="291" mass="33039">MSCQPFTSTDTFIPLNSESSATLPLIMHPSAAECLPVSNHATNVMSTATGLHYSVPFCHYGNQSSTYGVMAGSLTPCLYKFPDHTLSHGFPPMHQPLLSEDPTAADFKQELRRKSKLVEEPIDMDSPEIRELEKFANEFKVRRIKLGYTQTNVGEALAAVHGSEFSQTTICRFENLQLSFKNACKLKAILSKWLEEAEQVGALYNEKVGANERKRKRRTTISIAAKDALERHFGEQNKPSSQEILRMAEELNLEKEVVRVWFCNRRQREKRVKTSLNQSLFTISKEHLECR</sequence>
<keyword id="KW-0010">Activator</keyword>
<keyword id="KW-0238">DNA-binding</keyword>
<keyword id="KW-0371">Homeobox</keyword>
<keyword id="KW-0539">Nucleus</keyword>
<keyword id="KW-1185">Reference proteome</keyword>
<keyword id="KW-0804">Transcription</keyword>
<keyword id="KW-0805">Transcription regulation</keyword>
<name>PIT1_BOVIN</name>
<organism>
    <name type="scientific">Bos taurus</name>
    <name type="common">Bovine</name>
    <dbReference type="NCBI Taxonomy" id="9913"/>
    <lineage>
        <taxon>Eukaryota</taxon>
        <taxon>Metazoa</taxon>
        <taxon>Chordata</taxon>
        <taxon>Craniata</taxon>
        <taxon>Vertebrata</taxon>
        <taxon>Euteleostomi</taxon>
        <taxon>Mammalia</taxon>
        <taxon>Eutheria</taxon>
        <taxon>Laurasiatheria</taxon>
        <taxon>Artiodactyla</taxon>
        <taxon>Ruminantia</taxon>
        <taxon>Pecora</taxon>
        <taxon>Bovidae</taxon>
        <taxon>Bovinae</taxon>
        <taxon>Bos</taxon>
    </lineage>
</organism>
<comment type="function">
    <text evidence="1">Transcription factor involved in the specification of the lactotrope, somatotrope, and thyrotrope phenotypes in the developing anterior pituitary. Activates growth hormone and prolactin genes. Specifically binds to the consensus sequence 5'-TAAAT-3'.</text>
</comment>
<comment type="subunit">
    <text evidence="1">Interacts with PITX1. Interacts with LHX3. Interacts with ELK1.</text>
</comment>
<comment type="subcellular location">
    <subcellularLocation>
        <location evidence="1">Nucleus</location>
    </subcellularLocation>
</comment>
<comment type="domain">
    <text evidence="1">The 9aaTAD motif is a transactivation domain present in a large number of yeast and animal transcription factors.</text>
</comment>
<comment type="similarity">
    <text evidence="4">Belongs to the POU transcription factor family. Class-1 subfamily.</text>
</comment>
<accession>P10036</accession>
<feature type="chain" id="PRO_0000100695" description="Pituitary-specific positive transcription factor 1">
    <location>
        <begin position="1"/>
        <end position="291"/>
    </location>
</feature>
<feature type="domain" description="POU-specific" evidence="3">
    <location>
        <begin position="124"/>
        <end position="198"/>
    </location>
</feature>
<feature type="DNA-binding region" description="Homeobox" evidence="2">
    <location>
        <begin position="214"/>
        <end position="273"/>
    </location>
</feature>
<feature type="short sequence motif" description="9aaTAD" evidence="1">
    <location>
        <begin position="5"/>
        <end position="13"/>
    </location>
</feature>
<evidence type="ECO:0000250" key="1">
    <source>
        <dbReference type="UniProtKB" id="P28069"/>
    </source>
</evidence>
<evidence type="ECO:0000255" key="2">
    <source>
        <dbReference type="PROSITE-ProRule" id="PRU00108"/>
    </source>
</evidence>
<evidence type="ECO:0000255" key="3">
    <source>
        <dbReference type="PROSITE-ProRule" id="PRU00530"/>
    </source>
</evidence>
<evidence type="ECO:0000305" key="4"/>
<gene>
    <name type="primary">POU1F1</name>
    <name type="synonym">GHF-1</name>
    <name type="synonym">PIT-1</name>
    <name type="synonym">PIT1</name>
</gene>
<reference key="1">
    <citation type="journal article" date="1988" name="Cell">
        <title>The pituitary-specific transcription factor GHF-1 is a homeobox-containing protein.</title>
        <authorList>
            <person name="Bodner M."/>
            <person name="Castrillo J.-L."/>
            <person name="Theill L.E."/>
            <person name="Deerinck T."/>
            <person name="Ellisman M."/>
            <person name="Karin M."/>
        </authorList>
    </citation>
    <scope>NUCLEOTIDE SEQUENCE [MRNA]</scope>
</reference>
<dbReference type="EMBL" id="X12657">
    <property type="protein sequence ID" value="CAA31184.1"/>
    <property type="molecule type" value="mRNA"/>
</dbReference>
<dbReference type="PIR" id="A31305">
    <property type="entry name" value="A31305"/>
</dbReference>
<dbReference type="SMR" id="P10036"/>
<dbReference type="FunCoup" id="P10036">
    <property type="interactions" value="126"/>
</dbReference>
<dbReference type="STRING" id="9913.ENSBTAP00000050905"/>
<dbReference type="InParanoid" id="P10036"/>
<dbReference type="OrthoDB" id="6358449at2759"/>
<dbReference type="Proteomes" id="UP000009136">
    <property type="component" value="Unplaced"/>
</dbReference>
<dbReference type="GO" id="GO:0005634">
    <property type="term" value="C:nucleus"/>
    <property type="evidence" value="ECO:0000250"/>
    <property type="project" value="UniProtKB"/>
</dbReference>
<dbReference type="GO" id="GO:0000981">
    <property type="term" value="F:DNA-binding transcription factor activity, RNA polymerase II-specific"/>
    <property type="evidence" value="ECO:0000250"/>
    <property type="project" value="UniProtKB"/>
</dbReference>
<dbReference type="GO" id="GO:0000978">
    <property type="term" value="F:RNA polymerase II cis-regulatory region sequence-specific DNA binding"/>
    <property type="evidence" value="ECO:0000318"/>
    <property type="project" value="GO_Central"/>
</dbReference>
<dbReference type="GO" id="GO:0045944">
    <property type="term" value="P:positive regulation of transcription by RNA polymerase II"/>
    <property type="evidence" value="ECO:0000250"/>
    <property type="project" value="UniProtKB"/>
</dbReference>
<dbReference type="GO" id="GO:0006357">
    <property type="term" value="P:regulation of transcription by RNA polymerase II"/>
    <property type="evidence" value="ECO:0000318"/>
    <property type="project" value="GO_Central"/>
</dbReference>
<dbReference type="CDD" id="cd00086">
    <property type="entry name" value="homeodomain"/>
    <property type="match status" value="1"/>
</dbReference>
<dbReference type="FunFam" id="1.10.10.60:FF:000150">
    <property type="entry name" value="POU domain protein"/>
    <property type="match status" value="1"/>
</dbReference>
<dbReference type="FunFam" id="1.10.260.40:FF:000007">
    <property type="entry name" value="POU domain protein"/>
    <property type="match status" value="1"/>
</dbReference>
<dbReference type="Gene3D" id="1.10.10.60">
    <property type="entry name" value="Homeodomain-like"/>
    <property type="match status" value="1"/>
</dbReference>
<dbReference type="Gene3D" id="1.10.260.40">
    <property type="entry name" value="lambda repressor-like DNA-binding domains"/>
    <property type="match status" value="1"/>
</dbReference>
<dbReference type="InterPro" id="IPR001356">
    <property type="entry name" value="HD"/>
</dbReference>
<dbReference type="InterPro" id="IPR017970">
    <property type="entry name" value="Homeobox_CS"/>
</dbReference>
<dbReference type="InterPro" id="IPR009057">
    <property type="entry name" value="Homeodomain-like_sf"/>
</dbReference>
<dbReference type="InterPro" id="IPR010982">
    <property type="entry name" value="Lambda_DNA-bd_dom_sf"/>
</dbReference>
<dbReference type="InterPro" id="IPR013847">
    <property type="entry name" value="POU"/>
</dbReference>
<dbReference type="InterPro" id="IPR000327">
    <property type="entry name" value="POU_dom"/>
</dbReference>
<dbReference type="InterPro" id="IPR050255">
    <property type="entry name" value="POU_domain_TF"/>
</dbReference>
<dbReference type="PANTHER" id="PTHR11636:SF84">
    <property type="entry name" value="NETRIN-1-RELATED"/>
    <property type="match status" value="1"/>
</dbReference>
<dbReference type="PANTHER" id="PTHR11636">
    <property type="entry name" value="POU DOMAIN"/>
    <property type="match status" value="1"/>
</dbReference>
<dbReference type="Pfam" id="PF00046">
    <property type="entry name" value="Homeodomain"/>
    <property type="match status" value="1"/>
</dbReference>
<dbReference type="Pfam" id="PF00157">
    <property type="entry name" value="Pou"/>
    <property type="match status" value="1"/>
</dbReference>
<dbReference type="PRINTS" id="PR00028">
    <property type="entry name" value="POUDOMAIN"/>
</dbReference>
<dbReference type="SMART" id="SM00389">
    <property type="entry name" value="HOX"/>
    <property type="match status" value="1"/>
</dbReference>
<dbReference type="SMART" id="SM00352">
    <property type="entry name" value="POU"/>
    <property type="match status" value="1"/>
</dbReference>
<dbReference type="SUPFAM" id="SSF46689">
    <property type="entry name" value="Homeodomain-like"/>
    <property type="match status" value="1"/>
</dbReference>
<dbReference type="SUPFAM" id="SSF47413">
    <property type="entry name" value="lambda repressor-like DNA-binding domains"/>
    <property type="match status" value="1"/>
</dbReference>
<dbReference type="PROSITE" id="PS00027">
    <property type="entry name" value="HOMEOBOX_1"/>
    <property type="match status" value="1"/>
</dbReference>
<dbReference type="PROSITE" id="PS50071">
    <property type="entry name" value="HOMEOBOX_2"/>
    <property type="match status" value="1"/>
</dbReference>
<dbReference type="PROSITE" id="PS00035">
    <property type="entry name" value="POU_1"/>
    <property type="match status" value="1"/>
</dbReference>
<dbReference type="PROSITE" id="PS00465">
    <property type="entry name" value="POU_2"/>
    <property type="match status" value="1"/>
</dbReference>
<dbReference type="PROSITE" id="PS51179">
    <property type="entry name" value="POU_3"/>
    <property type="match status" value="1"/>
</dbReference>
<proteinExistence type="evidence at transcript level"/>
<protein>
    <recommendedName>
        <fullName>Pituitary-specific positive transcription factor 1</fullName>
        <shortName>PIT-1</shortName>
    </recommendedName>
    <alternativeName>
        <fullName>Growth hormone factor 1</fullName>
        <shortName>GHF-1</shortName>
    </alternativeName>
</protein>